<keyword id="KW-0687">Ribonucleoprotein</keyword>
<keyword id="KW-0689">Ribosomal protein</keyword>
<name>RL32_ECOLU</name>
<protein>
    <recommendedName>
        <fullName evidence="1">Large ribosomal subunit protein bL32</fullName>
    </recommendedName>
    <alternativeName>
        <fullName evidence="3">50S ribosomal protein L32</fullName>
    </alternativeName>
</protein>
<sequence length="57" mass="6446">MAVQQNKPTRSKRGMRRSHDALTAVTSLSVDKTSGEKHLRHHITADGYYRGRKVIAK</sequence>
<organism>
    <name type="scientific">Escherichia coli O17:K52:H18 (strain UMN026 / ExPEC)</name>
    <dbReference type="NCBI Taxonomy" id="585056"/>
    <lineage>
        <taxon>Bacteria</taxon>
        <taxon>Pseudomonadati</taxon>
        <taxon>Pseudomonadota</taxon>
        <taxon>Gammaproteobacteria</taxon>
        <taxon>Enterobacterales</taxon>
        <taxon>Enterobacteriaceae</taxon>
        <taxon>Escherichia</taxon>
    </lineage>
</organism>
<comment type="similarity">
    <text evidence="1">Belongs to the bacterial ribosomal protein bL32 family.</text>
</comment>
<reference key="1">
    <citation type="journal article" date="2009" name="PLoS Genet.">
        <title>Organised genome dynamics in the Escherichia coli species results in highly diverse adaptive paths.</title>
        <authorList>
            <person name="Touchon M."/>
            <person name="Hoede C."/>
            <person name="Tenaillon O."/>
            <person name="Barbe V."/>
            <person name="Baeriswyl S."/>
            <person name="Bidet P."/>
            <person name="Bingen E."/>
            <person name="Bonacorsi S."/>
            <person name="Bouchier C."/>
            <person name="Bouvet O."/>
            <person name="Calteau A."/>
            <person name="Chiapello H."/>
            <person name="Clermont O."/>
            <person name="Cruveiller S."/>
            <person name="Danchin A."/>
            <person name="Diard M."/>
            <person name="Dossat C."/>
            <person name="Karoui M.E."/>
            <person name="Frapy E."/>
            <person name="Garry L."/>
            <person name="Ghigo J.M."/>
            <person name="Gilles A.M."/>
            <person name="Johnson J."/>
            <person name="Le Bouguenec C."/>
            <person name="Lescat M."/>
            <person name="Mangenot S."/>
            <person name="Martinez-Jehanne V."/>
            <person name="Matic I."/>
            <person name="Nassif X."/>
            <person name="Oztas S."/>
            <person name="Petit M.A."/>
            <person name="Pichon C."/>
            <person name="Rouy Z."/>
            <person name="Ruf C.S."/>
            <person name="Schneider D."/>
            <person name="Tourret J."/>
            <person name="Vacherie B."/>
            <person name="Vallenet D."/>
            <person name="Medigue C."/>
            <person name="Rocha E.P.C."/>
            <person name="Denamur E."/>
        </authorList>
    </citation>
    <scope>NUCLEOTIDE SEQUENCE [LARGE SCALE GENOMIC DNA]</scope>
    <source>
        <strain>UMN026 / ExPEC</strain>
    </source>
</reference>
<proteinExistence type="inferred from homology"/>
<evidence type="ECO:0000255" key="1">
    <source>
        <dbReference type="HAMAP-Rule" id="MF_00340"/>
    </source>
</evidence>
<evidence type="ECO:0000256" key="2">
    <source>
        <dbReference type="SAM" id="MobiDB-lite"/>
    </source>
</evidence>
<evidence type="ECO:0000305" key="3"/>
<accession>B7NAW5</accession>
<feature type="chain" id="PRO_1000120121" description="Large ribosomal subunit protein bL32">
    <location>
        <begin position="1"/>
        <end position="57"/>
    </location>
</feature>
<feature type="region of interest" description="Disordered" evidence="2">
    <location>
        <begin position="1"/>
        <end position="38"/>
    </location>
</feature>
<dbReference type="EMBL" id="CU928163">
    <property type="protein sequence ID" value="CAR12474.1"/>
    <property type="molecule type" value="Genomic_DNA"/>
</dbReference>
<dbReference type="RefSeq" id="WP_000290727.1">
    <property type="nucleotide sequence ID" value="NC_011751.1"/>
</dbReference>
<dbReference type="RefSeq" id="YP_002412017.1">
    <property type="nucleotide sequence ID" value="NC_011751.1"/>
</dbReference>
<dbReference type="SMR" id="B7NAW5"/>
<dbReference type="STRING" id="585056.ECUMN_1264"/>
<dbReference type="GeneID" id="93776319"/>
<dbReference type="KEGG" id="eum:ECUMN_1264"/>
<dbReference type="PATRIC" id="fig|585056.7.peg.1469"/>
<dbReference type="HOGENOM" id="CLU_129084_2_1_6"/>
<dbReference type="Proteomes" id="UP000007097">
    <property type="component" value="Chromosome"/>
</dbReference>
<dbReference type="GO" id="GO:0015934">
    <property type="term" value="C:large ribosomal subunit"/>
    <property type="evidence" value="ECO:0007669"/>
    <property type="project" value="InterPro"/>
</dbReference>
<dbReference type="GO" id="GO:0003735">
    <property type="term" value="F:structural constituent of ribosome"/>
    <property type="evidence" value="ECO:0007669"/>
    <property type="project" value="InterPro"/>
</dbReference>
<dbReference type="GO" id="GO:0006412">
    <property type="term" value="P:translation"/>
    <property type="evidence" value="ECO:0007669"/>
    <property type="project" value="UniProtKB-UniRule"/>
</dbReference>
<dbReference type="HAMAP" id="MF_00340">
    <property type="entry name" value="Ribosomal_bL32"/>
    <property type="match status" value="1"/>
</dbReference>
<dbReference type="InterPro" id="IPR002677">
    <property type="entry name" value="Ribosomal_bL32"/>
</dbReference>
<dbReference type="InterPro" id="IPR044957">
    <property type="entry name" value="Ribosomal_bL32_bact"/>
</dbReference>
<dbReference type="InterPro" id="IPR011332">
    <property type="entry name" value="Ribosomal_zn-bd"/>
</dbReference>
<dbReference type="NCBIfam" id="TIGR01031">
    <property type="entry name" value="rpmF_bact"/>
    <property type="match status" value="1"/>
</dbReference>
<dbReference type="PANTHER" id="PTHR35534">
    <property type="entry name" value="50S RIBOSOMAL PROTEIN L32"/>
    <property type="match status" value="1"/>
</dbReference>
<dbReference type="PANTHER" id="PTHR35534:SF1">
    <property type="entry name" value="LARGE RIBOSOMAL SUBUNIT PROTEIN BL32"/>
    <property type="match status" value="1"/>
</dbReference>
<dbReference type="Pfam" id="PF01783">
    <property type="entry name" value="Ribosomal_L32p"/>
    <property type="match status" value="1"/>
</dbReference>
<dbReference type="SUPFAM" id="SSF57829">
    <property type="entry name" value="Zn-binding ribosomal proteins"/>
    <property type="match status" value="1"/>
</dbReference>
<gene>
    <name evidence="1" type="primary">rpmF</name>
    <name type="ordered locus">ECUMN_1264</name>
</gene>